<protein>
    <recommendedName>
        <fullName evidence="1">N5-carboxyaminoimidazole ribonucleotide synthase</fullName>
        <shortName evidence="1">N5-CAIR synthase</shortName>
        <ecNumber evidence="1">6.3.4.18</ecNumber>
    </recommendedName>
    <alternativeName>
        <fullName evidence="1">5-(carboxyamino)imidazole ribonucleotide synthetase</fullName>
    </alternativeName>
</protein>
<reference key="1">
    <citation type="journal article" date="2005" name="J. Bacteriol.">
        <title>Insights on evolution of virulence and resistance from the complete genome analysis of an early methicillin-resistant Staphylococcus aureus strain and a biofilm-producing methicillin-resistant Staphylococcus epidermidis strain.</title>
        <authorList>
            <person name="Gill S.R."/>
            <person name="Fouts D.E."/>
            <person name="Archer G.L."/>
            <person name="Mongodin E.F."/>
            <person name="DeBoy R.T."/>
            <person name="Ravel J."/>
            <person name="Paulsen I.T."/>
            <person name="Kolonay J.F."/>
            <person name="Brinkac L.M."/>
            <person name="Beanan M.J."/>
            <person name="Dodson R.J."/>
            <person name="Daugherty S.C."/>
            <person name="Madupu R."/>
            <person name="Angiuoli S.V."/>
            <person name="Durkin A.S."/>
            <person name="Haft D.H."/>
            <person name="Vamathevan J.J."/>
            <person name="Khouri H."/>
            <person name="Utterback T.R."/>
            <person name="Lee C."/>
            <person name="Dimitrov G."/>
            <person name="Jiang L."/>
            <person name="Qin H."/>
            <person name="Weidman J."/>
            <person name="Tran K."/>
            <person name="Kang K.H."/>
            <person name="Hance I.R."/>
            <person name="Nelson K.E."/>
            <person name="Fraser C.M."/>
        </authorList>
    </citation>
    <scope>NUCLEOTIDE SEQUENCE [LARGE SCALE GENOMIC DNA]</scope>
    <source>
        <strain>COL</strain>
    </source>
</reference>
<organism>
    <name type="scientific">Staphylococcus aureus (strain COL)</name>
    <dbReference type="NCBI Taxonomy" id="93062"/>
    <lineage>
        <taxon>Bacteria</taxon>
        <taxon>Bacillati</taxon>
        <taxon>Bacillota</taxon>
        <taxon>Bacilli</taxon>
        <taxon>Bacillales</taxon>
        <taxon>Staphylococcaceae</taxon>
        <taxon>Staphylococcus</taxon>
    </lineage>
</organism>
<keyword id="KW-0067">ATP-binding</keyword>
<keyword id="KW-0436">Ligase</keyword>
<keyword id="KW-0547">Nucleotide-binding</keyword>
<keyword id="KW-0658">Purine biosynthesis</keyword>
<comment type="function">
    <text evidence="1">Catalyzes the ATP-dependent conversion of 5-aminoimidazole ribonucleotide (AIR) and HCO(3)(-) to N5-carboxyaminoimidazole ribonucleotide (N5-CAIR).</text>
</comment>
<comment type="catalytic activity">
    <reaction evidence="1">
        <text>5-amino-1-(5-phospho-beta-D-ribosyl)imidazole + hydrogencarbonate + ATP = 5-carboxyamino-1-(5-phospho-D-ribosyl)imidazole + ADP + phosphate + 2 H(+)</text>
        <dbReference type="Rhea" id="RHEA:19317"/>
        <dbReference type="ChEBI" id="CHEBI:15378"/>
        <dbReference type="ChEBI" id="CHEBI:17544"/>
        <dbReference type="ChEBI" id="CHEBI:30616"/>
        <dbReference type="ChEBI" id="CHEBI:43474"/>
        <dbReference type="ChEBI" id="CHEBI:58730"/>
        <dbReference type="ChEBI" id="CHEBI:137981"/>
        <dbReference type="ChEBI" id="CHEBI:456216"/>
        <dbReference type="EC" id="6.3.4.18"/>
    </reaction>
</comment>
<comment type="pathway">
    <text evidence="1">Purine metabolism; IMP biosynthesis via de novo pathway; 5-amino-1-(5-phospho-D-ribosyl)imidazole-4-carboxylate from 5-amino-1-(5-phospho-D-ribosyl)imidazole (N5-CAIR route): step 1/2.</text>
</comment>
<comment type="subunit">
    <text evidence="1">Homodimer.</text>
</comment>
<comment type="similarity">
    <text evidence="1">Belongs to the PurK/PurT family.</text>
</comment>
<gene>
    <name evidence="1" type="primary">purK</name>
    <name type="ordered locus">SACOL1074</name>
</gene>
<proteinExistence type="inferred from homology"/>
<feature type="chain" id="PRO_0000075003" description="N5-carboxyaminoimidazole ribonucleotide synthase">
    <location>
        <begin position="1"/>
        <end position="374"/>
    </location>
</feature>
<feature type="domain" description="ATP-grasp" evidence="1">
    <location>
        <begin position="112"/>
        <end position="296"/>
    </location>
</feature>
<feature type="binding site" evidence="1">
    <location>
        <position position="108"/>
    </location>
    <ligand>
        <name>ATP</name>
        <dbReference type="ChEBI" id="CHEBI:30616"/>
    </ligand>
</feature>
<feature type="binding site" evidence="1">
    <location>
        <position position="148"/>
    </location>
    <ligand>
        <name>ATP</name>
        <dbReference type="ChEBI" id="CHEBI:30616"/>
    </ligand>
</feature>
<feature type="binding site" evidence="1">
    <location>
        <begin position="153"/>
        <end position="159"/>
    </location>
    <ligand>
        <name>ATP</name>
        <dbReference type="ChEBI" id="CHEBI:30616"/>
    </ligand>
</feature>
<feature type="binding site" evidence="1">
    <location>
        <begin position="183"/>
        <end position="186"/>
    </location>
    <ligand>
        <name>ATP</name>
        <dbReference type="ChEBI" id="CHEBI:30616"/>
    </ligand>
</feature>
<feature type="binding site" evidence="1">
    <location>
        <position position="191"/>
    </location>
    <ligand>
        <name>ATP</name>
        <dbReference type="ChEBI" id="CHEBI:30616"/>
    </ligand>
</feature>
<feature type="binding site" evidence="1">
    <location>
        <position position="214"/>
    </location>
    <ligand>
        <name>ATP</name>
        <dbReference type="ChEBI" id="CHEBI:30616"/>
    </ligand>
</feature>
<feature type="binding site" evidence="1">
    <location>
        <begin position="266"/>
        <end position="267"/>
    </location>
    <ligand>
        <name>ATP</name>
        <dbReference type="ChEBI" id="CHEBI:30616"/>
    </ligand>
</feature>
<dbReference type="EC" id="6.3.4.18" evidence="1"/>
<dbReference type="EMBL" id="CP000046">
    <property type="protein sequence ID" value="AAW37954.1"/>
    <property type="molecule type" value="Genomic_DNA"/>
</dbReference>
<dbReference type="RefSeq" id="WP_001010412.1">
    <property type="nucleotide sequence ID" value="NZ_JBGOFO010000002.1"/>
</dbReference>
<dbReference type="SMR" id="Q5HH19"/>
<dbReference type="KEGG" id="sac:SACOL1074"/>
<dbReference type="HOGENOM" id="CLU_011534_0_1_9"/>
<dbReference type="UniPathway" id="UPA00074">
    <property type="reaction ID" value="UER00942"/>
</dbReference>
<dbReference type="Proteomes" id="UP000000530">
    <property type="component" value="Chromosome"/>
</dbReference>
<dbReference type="GO" id="GO:0005829">
    <property type="term" value="C:cytosol"/>
    <property type="evidence" value="ECO:0007669"/>
    <property type="project" value="TreeGrafter"/>
</dbReference>
<dbReference type="GO" id="GO:0034028">
    <property type="term" value="F:5-(carboxyamino)imidazole ribonucleotide synthase activity"/>
    <property type="evidence" value="ECO:0007669"/>
    <property type="project" value="UniProtKB-UniRule"/>
</dbReference>
<dbReference type="GO" id="GO:0005524">
    <property type="term" value="F:ATP binding"/>
    <property type="evidence" value="ECO:0007669"/>
    <property type="project" value="UniProtKB-KW"/>
</dbReference>
<dbReference type="GO" id="GO:0046872">
    <property type="term" value="F:metal ion binding"/>
    <property type="evidence" value="ECO:0007669"/>
    <property type="project" value="InterPro"/>
</dbReference>
<dbReference type="GO" id="GO:0004638">
    <property type="term" value="F:phosphoribosylaminoimidazole carboxylase activity"/>
    <property type="evidence" value="ECO:0007669"/>
    <property type="project" value="InterPro"/>
</dbReference>
<dbReference type="GO" id="GO:0006189">
    <property type="term" value="P:'de novo' IMP biosynthetic process"/>
    <property type="evidence" value="ECO:0007669"/>
    <property type="project" value="UniProtKB-UniRule"/>
</dbReference>
<dbReference type="FunFam" id="3.30.1490.20:FF:000015">
    <property type="entry name" value="N5-carboxyaminoimidazole ribonucleotide synthase"/>
    <property type="match status" value="1"/>
</dbReference>
<dbReference type="FunFam" id="3.40.50.20:FF:000016">
    <property type="entry name" value="N5-carboxyaminoimidazole ribonucleotide synthase"/>
    <property type="match status" value="1"/>
</dbReference>
<dbReference type="Gene3D" id="3.40.50.20">
    <property type="match status" value="1"/>
</dbReference>
<dbReference type="Gene3D" id="3.30.1490.20">
    <property type="entry name" value="ATP-grasp fold, A domain"/>
    <property type="match status" value="1"/>
</dbReference>
<dbReference type="Gene3D" id="3.30.470.20">
    <property type="entry name" value="ATP-grasp fold, B domain"/>
    <property type="match status" value="1"/>
</dbReference>
<dbReference type="HAMAP" id="MF_01928">
    <property type="entry name" value="PurK"/>
    <property type="match status" value="1"/>
</dbReference>
<dbReference type="InterPro" id="IPR011761">
    <property type="entry name" value="ATP-grasp"/>
</dbReference>
<dbReference type="InterPro" id="IPR003135">
    <property type="entry name" value="ATP-grasp_carboxylate-amine"/>
</dbReference>
<dbReference type="InterPro" id="IPR013815">
    <property type="entry name" value="ATP_grasp_subdomain_1"/>
</dbReference>
<dbReference type="InterPro" id="IPR016185">
    <property type="entry name" value="PreATP-grasp_dom_sf"/>
</dbReference>
<dbReference type="InterPro" id="IPR005875">
    <property type="entry name" value="PurK"/>
</dbReference>
<dbReference type="InterPro" id="IPR040686">
    <property type="entry name" value="PurK_C"/>
</dbReference>
<dbReference type="InterPro" id="IPR054350">
    <property type="entry name" value="PurT/PurK_preATP-grasp"/>
</dbReference>
<dbReference type="InterPro" id="IPR011054">
    <property type="entry name" value="Rudment_hybrid_motif"/>
</dbReference>
<dbReference type="NCBIfam" id="NF004675">
    <property type="entry name" value="PRK06019.1-1"/>
    <property type="match status" value="1"/>
</dbReference>
<dbReference type="NCBIfam" id="NF004676">
    <property type="entry name" value="PRK06019.1-2"/>
    <property type="match status" value="1"/>
</dbReference>
<dbReference type="NCBIfam" id="NF004679">
    <property type="entry name" value="PRK06019.1-5"/>
    <property type="match status" value="1"/>
</dbReference>
<dbReference type="NCBIfam" id="TIGR01161">
    <property type="entry name" value="purK"/>
    <property type="match status" value="1"/>
</dbReference>
<dbReference type="PANTHER" id="PTHR11609:SF5">
    <property type="entry name" value="PHOSPHORIBOSYLAMINOIMIDAZOLE CARBOXYLASE"/>
    <property type="match status" value="1"/>
</dbReference>
<dbReference type="PANTHER" id="PTHR11609">
    <property type="entry name" value="PURINE BIOSYNTHESIS PROTEIN 6/7, PUR6/7"/>
    <property type="match status" value="1"/>
</dbReference>
<dbReference type="Pfam" id="PF02222">
    <property type="entry name" value="ATP-grasp"/>
    <property type="match status" value="1"/>
</dbReference>
<dbReference type="Pfam" id="PF17769">
    <property type="entry name" value="PurK_C"/>
    <property type="match status" value="1"/>
</dbReference>
<dbReference type="Pfam" id="PF22660">
    <property type="entry name" value="RS_preATP-grasp-like"/>
    <property type="match status" value="1"/>
</dbReference>
<dbReference type="SUPFAM" id="SSF56059">
    <property type="entry name" value="Glutathione synthetase ATP-binding domain-like"/>
    <property type="match status" value="1"/>
</dbReference>
<dbReference type="SUPFAM" id="SSF52440">
    <property type="entry name" value="PreATP-grasp domain"/>
    <property type="match status" value="1"/>
</dbReference>
<dbReference type="SUPFAM" id="SSF51246">
    <property type="entry name" value="Rudiment single hybrid motif"/>
    <property type="match status" value="1"/>
</dbReference>
<dbReference type="PROSITE" id="PS50975">
    <property type="entry name" value="ATP_GRASP"/>
    <property type="match status" value="1"/>
</dbReference>
<accession>Q5HH19</accession>
<sequence length="374" mass="42493">MNFNKLKFGATIGIIGGGQLGKMMAQSAQKMGYKVVVLDPSEDCPCRYVAHEFIQAKYDDEKALNQLGQKCDVITYEFENISAQQLKLLCEKYNIPQGYQAIQLLQDRLTEKETLKSAGTKVVPFISVKESTDIDKAIETLGYPFIVKTRFGGYDGKGQVLINNEKDLQEGFKLIETSECVAEKYLNIKKEVSLTVTRGNNNQITFFPLQENEHRNQILFKTIVPARIDKTAEAKEQVNKIIQSIHFIGTFTVEFFIDSNNQLYVNEIAPRPHNSGHYSIEACDYSQFDTHILAVTGQSLPNSIELLKPAVMMNLLGKDLDLLENEFNEHPEWHLHIYGKSERKDSRKMGHMTVLTNDVNQTEQDMYAKFEGSN</sequence>
<name>PURK_STAAC</name>
<evidence type="ECO:0000255" key="1">
    <source>
        <dbReference type="HAMAP-Rule" id="MF_01928"/>
    </source>
</evidence>